<organism>
    <name type="scientific">Toscana virus</name>
    <name type="common">Tos</name>
    <dbReference type="NCBI Taxonomy" id="11590"/>
    <lineage>
        <taxon>Viruses</taxon>
        <taxon>Riboviria</taxon>
        <taxon>Orthornavirae</taxon>
        <taxon>Negarnaviricota</taxon>
        <taxon>Polyploviricotina</taxon>
        <taxon>Ellioviricetes</taxon>
        <taxon>Bunyavirales</taxon>
        <taxon>Phenuiviridae</taxon>
        <taxon>Phlebovirus</taxon>
        <taxon>Phlebovirus toscanaense</taxon>
    </lineage>
</organism>
<reference key="1">
    <citation type="journal article" date="1991" name="Virology">
        <title>Sequences and coding strategies of the S RNAs of Toscana and Rift Valley fever viruses compared to those of Punta Toro, Sicilian Sandfly fever, and Uukuniemi viruses.</title>
        <authorList>
            <person name="Giorgi C."/>
            <person name="Accardi L."/>
            <person name="Nicoletti L."/>
            <person name="Gro M.C."/>
            <person name="Takehara K."/>
            <person name="Hilditch C."/>
            <person name="Morikawa S."/>
            <person name="Bishop D.H.L."/>
        </authorList>
    </citation>
    <scope>NUCLEOTIDE SEQUENCE [GENOMIC RNA]</scope>
</reference>
<reference key="2">
    <citation type="journal article" date="2013" name="J. Virol.">
        <title>Toscana Virus NSs protein inhibits the induction of type I interferon by interacting with RIG-I.</title>
        <authorList>
            <person name="Gori-Savellini G."/>
            <person name="Valentini M."/>
            <person name="Cusi M.G."/>
        </authorList>
    </citation>
    <scope>FUNCTION</scope>
    <scope>INTERACTION WITH HOST RIGI</scope>
</reference>
<reference key="3">
    <citation type="journal article" date="2013" name="J. Virol.">
        <title>Toscana virus NSs protein promoftes degradation of double-stranded RNA-dependent protein kinase.</title>
        <authorList>
            <person name="Kalveram B."/>
            <person name="Ikegami T."/>
        </authorList>
    </citation>
    <scope>FUNCTION</scope>
    <scope>INTERACTION WITH HOST EIF2AK2/PKR</scope>
</reference>
<evidence type="ECO:0000269" key="1">
    <source>
    </source>
</evidence>
<evidence type="ECO:0000269" key="2">
    <source>
    </source>
</evidence>
<evidence type="ECO:0000305" key="3"/>
<keyword id="KW-0945">Host-virus interaction</keyword>
<keyword id="KW-1090">Inhibition of host innate immune response by virus</keyword>
<keyword id="KW-1114">Inhibition of host interferon signaling pathway by virus</keyword>
<keyword id="KW-1102">Inhibition of host PKR by virus</keyword>
<keyword id="KW-1088">Inhibition of host RIG-I by virus</keyword>
<keyword id="KW-1113">Inhibition of host RLR pathway by virus</keyword>
<keyword id="KW-0922">Interferon antiviral system evasion</keyword>
<keyword id="KW-1185">Reference proteome</keyword>
<keyword id="KW-0899">Viral immunoevasion</keyword>
<dbReference type="EMBL" id="X53794">
    <property type="protein sequence ID" value="CAA37802.1"/>
    <property type="molecule type" value="Genomic_RNA"/>
</dbReference>
<dbReference type="PIR" id="A38552">
    <property type="entry name" value="MNVUTV"/>
</dbReference>
<dbReference type="SMR" id="P21699"/>
<dbReference type="IntAct" id="P21699">
    <property type="interactions" value="1"/>
</dbReference>
<dbReference type="KEGG" id="vg:3077269"/>
<dbReference type="Proteomes" id="UP000204292">
    <property type="component" value="Genome"/>
</dbReference>
<dbReference type="GO" id="GO:0030291">
    <property type="term" value="F:protein serine/threonine kinase inhibitor activity"/>
    <property type="evidence" value="ECO:0007669"/>
    <property type="project" value="UniProtKB-KW"/>
</dbReference>
<dbReference type="GO" id="GO:0039540">
    <property type="term" value="P:symbiont-mediated suppression of host cytoplasmic pattern recognition receptor signaling pathway via inhibition of RIG-I activity"/>
    <property type="evidence" value="ECO:0000314"/>
    <property type="project" value="UniProtKB"/>
</dbReference>
<dbReference type="GO" id="GO:0039580">
    <property type="term" value="P:symbiont-mediated suppression of host PKR/eIFalpha signaling"/>
    <property type="evidence" value="ECO:0007669"/>
    <property type="project" value="UniProtKB-KW"/>
</dbReference>
<dbReference type="GO" id="GO:0039502">
    <property type="term" value="P:symbiont-mediated suppression of host type I interferon-mediated signaling pathway"/>
    <property type="evidence" value="ECO:0007669"/>
    <property type="project" value="UniProtKB-KW"/>
</dbReference>
<dbReference type="InterPro" id="IPR039434">
    <property type="entry name" value="NSs-like"/>
</dbReference>
<dbReference type="Pfam" id="PF11073">
    <property type="entry name" value="NSs"/>
    <property type="match status" value="1"/>
</dbReference>
<protein>
    <recommendedName>
        <fullName>Non-structural protein NS-S</fullName>
        <shortName>NSs</shortName>
    </recommendedName>
</protein>
<organismHost>
    <name type="scientific">Homo sapiens</name>
    <name type="common">Human</name>
    <dbReference type="NCBI Taxonomy" id="9606"/>
</organismHost>
<organismHost>
    <name type="scientific">Phlebotomus perniciosus</name>
    <name type="common">Phlebotomine sand fly</name>
    <dbReference type="NCBI Taxonomy" id="13204"/>
</organismHost>
<feature type="chain" id="PRO_0000221981" description="Non-structural protein NS-S">
    <location>
        <begin position="1"/>
        <end position="316"/>
    </location>
</feature>
<comment type="function">
    <text evidence="1 2">Promotes the proteasomal degradation of host EIF2AK2/PKR but is unable to suppress host general transcription (PubMed:23325696). Prevents the establishment of the host antiviral state by interfering with beta interferon (IFN-beta) production. Interacts with host RIGI and targets it for proteasomal degradation, thereby inhibiting RIGI-mediated signaling pathway (PubMed:23552410).</text>
</comment>
<comment type="subunit">
    <text evidence="1 2">Interacts with host RIGI; this interaction targets RIGI to proteasomal degradation (PubMed:23552410). Interacts with host EIF2AK2/PKR; this interaction leads to the proteasomal degradation of host EIF2AK2/PKR (PubMed:23325696).</text>
</comment>
<comment type="interaction">
    <interactant intactId="EBI-6693910">
        <id>P21699</id>
    </interactant>
    <interactant intactId="EBI-995350">
        <id>O95786</id>
        <label>RIGI</label>
    </interactant>
    <organismsDiffer>true</organismsDiffer>
    <experiments>3</experiments>
</comment>
<comment type="similarity">
    <text evidence="3">Belongs to the phlebovirus NS-S protein family.</text>
</comment>
<sequence>MQSRAVILKYRSGSGHKRSLPRFYIDCDLDTFDFEKDCSLIENEFPIYINNYKVVYKSKPTLSHFLIEKEFPAVLGPGMISAVRTRLYEPTMRELYQESIHQLKRSNKKYLLSALRWPTGIPTLEFIDYYFEELLFLSEFDPGSIQRYLKLLVKASGLYNSTNEEQIVEIHRRVLIEGKKHGLTAFDLPGNDILGDICVVQAARVTRLVAKTFSKMTRDTHLMIYFSISPVELVLSKLDKKGDKRAKAKGLMSMSAARSYDYFMRTDLGFRETALSTFWAKDWPTPQETILSDKRCLKEDMRVTKWLPSPPHYPPL</sequence>
<proteinExistence type="evidence at protein level"/>
<accession>P21699</accession>
<name>NSS_TOSV</name>
<gene>
    <name type="primary">NSS</name>
</gene>